<proteinExistence type="inferred from homology"/>
<feature type="chain" id="PRO_0000254420" description="ATP synthase subunit beta">
    <location>
        <begin position="1"/>
        <end position="467"/>
    </location>
</feature>
<feature type="binding site" evidence="1">
    <location>
        <begin position="150"/>
        <end position="157"/>
    </location>
    <ligand>
        <name>ATP</name>
        <dbReference type="ChEBI" id="CHEBI:30616"/>
    </ligand>
</feature>
<comment type="function">
    <text evidence="1">Produces ATP from ADP in the presence of a proton gradient across the membrane. The catalytic sites are hosted primarily by the beta subunits.</text>
</comment>
<comment type="catalytic activity">
    <reaction evidence="1">
        <text>ATP + H2O + 4 H(+)(in) = ADP + phosphate + 5 H(+)(out)</text>
        <dbReference type="Rhea" id="RHEA:57720"/>
        <dbReference type="ChEBI" id="CHEBI:15377"/>
        <dbReference type="ChEBI" id="CHEBI:15378"/>
        <dbReference type="ChEBI" id="CHEBI:30616"/>
        <dbReference type="ChEBI" id="CHEBI:43474"/>
        <dbReference type="ChEBI" id="CHEBI:456216"/>
        <dbReference type="EC" id="7.1.2.2"/>
    </reaction>
</comment>
<comment type="subunit">
    <text evidence="1">F-type ATPases have 2 components, CF(1) - the catalytic core - and CF(0) - the membrane proton channel. CF(1) has five subunits: alpha(3), beta(3), gamma(1), delta(1), epsilon(1). CF(0) has three main subunits: a(1), b(2) and c(9-12). The alpha and beta chains form an alternating ring which encloses part of the gamma chain. CF(1) is attached to CF(0) by a central stalk formed by the gamma and epsilon chains, while a peripheral stalk is formed by the delta and b chains.</text>
</comment>
<comment type="subcellular location">
    <subcellularLocation>
        <location evidence="1">Cell inner membrane</location>
        <topology evidence="1">Peripheral membrane protein</topology>
    </subcellularLocation>
</comment>
<comment type="similarity">
    <text evidence="1">Belongs to the ATPase alpha/beta chains family.</text>
</comment>
<name>ATPB_ALIF1</name>
<organism>
    <name type="scientific">Aliivibrio fischeri (strain ATCC 700601 / ES114)</name>
    <name type="common">Vibrio fischeri</name>
    <dbReference type="NCBI Taxonomy" id="312309"/>
    <lineage>
        <taxon>Bacteria</taxon>
        <taxon>Pseudomonadati</taxon>
        <taxon>Pseudomonadota</taxon>
        <taxon>Gammaproteobacteria</taxon>
        <taxon>Vibrionales</taxon>
        <taxon>Vibrionaceae</taxon>
        <taxon>Aliivibrio</taxon>
    </lineage>
</organism>
<protein>
    <recommendedName>
        <fullName evidence="1">ATP synthase subunit beta</fullName>
        <ecNumber evidence="1">7.1.2.2</ecNumber>
    </recommendedName>
    <alternativeName>
        <fullName evidence="1">ATP synthase F1 sector subunit beta</fullName>
    </alternativeName>
    <alternativeName>
        <fullName evidence="1">F-ATPase subunit beta</fullName>
    </alternativeName>
</protein>
<evidence type="ECO:0000255" key="1">
    <source>
        <dbReference type="HAMAP-Rule" id="MF_01347"/>
    </source>
</evidence>
<dbReference type="EC" id="7.1.2.2" evidence="1"/>
<dbReference type="EMBL" id="CP000020">
    <property type="protein sequence ID" value="AAW87059.1"/>
    <property type="molecule type" value="Genomic_DNA"/>
</dbReference>
<dbReference type="RefSeq" id="WP_011262899.1">
    <property type="nucleotide sequence ID" value="NC_006840.2"/>
</dbReference>
<dbReference type="RefSeq" id="YP_205947.1">
    <property type="nucleotide sequence ID" value="NC_006840.2"/>
</dbReference>
<dbReference type="SMR" id="Q5E1N7"/>
<dbReference type="STRING" id="312309.VF_2564"/>
<dbReference type="EnsemblBacteria" id="AAW87059">
    <property type="protein sequence ID" value="AAW87059"/>
    <property type="gene ID" value="VF_2564"/>
</dbReference>
<dbReference type="GeneID" id="54165314"/>
<dbReference type="KEGG" id="vfi:VF_2564"/>
<dbReference type="PATRIC" id="fig|312309.11.peg.2591"/>
<dbReference type="eggNOG" id="COG0055">
    <property type="taxonomic scope" value="Bacteria"/>
</dbReference>
<dbReference type="HOGENOM" id="CLU_022398_0_2_6"/>
<dbReference type="OrthoDB" id="9801639at2"/>
<dbReference type="Proteomes" id="UP000000537">
    <property type="component" value="Chromosome I"/>
</dbReference>
<dbReference type="GO" id="GO:0005886">
    <property type="term" value="C:plasma membrane"/>
    <property type="evidence" value="ECO:0007669"/>
    <property type="project" value="UniProtKB-SubCell"/>
</dbReference>
<dbReference type="GO" id="GO:0045259">
    <property type="term" value="C:proton-transporting ATP synthase complex"/>
    <property type="evidence" value="ECO:0007669"/>
    <property type="project" value="UniProtKB-KW"/>
</dbReference>
<dbReference type="GO" id="GO:0005524">
    <property type="term" value="F:ATP binding"/>
    <property type="evidence" value="ECO:0007669"/>
    <property type="project" value="UniProtKB-UniRule"/>
</dbReference>
<dbReference type="GO" id="GO:0016887">
    <property type="term" value="F:ATP hydrolysis activity"/>
    <property type="evidence" value="ECO:0007669"/>
    <property type="project" value="InterPro"/>
</dbReference>
<dbReference type="GO" id="GO:0046933">
    <property type="term" value="F:proton-transporting ATP synthase activity, rotational mechanism"/>
    <property type="evidence" value="ECO:0007669"/>
    <property type="project" value="UniProtKB-UniRule"/>
</dbReference>
<dbReference type="CDD" id="cd18110">
    <property type="entry name" value="ATP-synt_F1_beta_C"/>
    <property type="match status" value="1"/>
</dbReference>
<dbReference type="CDD" id="cd18115">
    <property type="entry name" value="ATP-synt_F1_beta_N"/>
    <property type="match status" value="1"/>
</dbReference>
<dbReference type="CDD" id="cd01133">
    <property type="entry name" value="F1-ATPase_beta_CD"/>
    <property type="match status" value="1"/>
</dbReference>
<dbReference type="FunFam" id="1.10.1140.10:FF:000001">
    <property type="entry name" value="ATP synthase subunit beta"/>
    <property type="match status" value="1"/>
</dbReference>
<dbReference type="FunFam" id="2.40.10.170:FF:000003">
    <property type="entry name" value="ATP synthase subunit beta"/>
    <property type="match status" value="1"/>
</dbReference>
<dbReference type="FunFam" id="3.40.50.300:FF:000004">
    <property type="entry name" value="ATP synthase subunit beta"/>
    <property type="match status" value="1"/>
</dbReference>
<dbReference type="Gene3D" id="2.40.10.170">
    <property type="match status" value="1"/>
</dbReference>
<dbReference type="Gene3D" id="1.10.1140.10">
    <property type="entry name" value="Bovine Mitochondrial F1-atpase, Atp Synthase Beta Chain, Chain D, domain 3"/>
    <property type="match status" value="1"/>
</dbReference>
<dbReference type="Gene3D" id="3.40.50.300">
    <property type="entry name" value="P-loop containing nucleotide triphosphate hydrolases"/>
    <property type="match status" value="1"/>
</dbReference>
<dbReference type="HAMAP" id="MF_01347">
    <property type="entry name" value="ATP_synth_beta_bact"/>
    <property type="match status" value="1"/>
</dbReference>
<dbReference type="InterPro" id="IPR003593">
    <property type="entry name" value="AAA+_ATPase"/>
</dbReference>
<dbReference type="InterPro" id="IPR055190">
    <property type="entry name" value="ATP-synt_VA_C"/>
</dbReference>
<dbReference type="InterPro" id="IPR005722">
    <property type="entry name" value="ATP_synth_F1_bsu"/>
</dbReference>
<dbReference type="InterPro" id="IPR020003">
    <property type="entry name" value="ATPase_a/bsu_AS"/>
</dbReference>
<dbReference type="InterPro" id="IPR050053">
    <property type="entry name" value="ATPase_alpha/beta_chains"/>
</dbReference>
<dbReference type="InterPro" id="IPR004100">
    <property type="entry name" value="ATPase_F1/V1/A1_a/bsu_N"/>
</dbReference>
<dbReference type="InterPro" id="IPR036121">
    <property type="entry name" value="ATPase_F1/V1/A1_a/bsu_N_sf"/>
</dbReference>
<dbReference type="InterPro" id="IPR000194">
    <property type="entry name" value="ATPase_F1/V1/A1_a/bsu_nucl-bd"/>
</dbReference>
<dbReference type="InterPro" id="IPR024034">
    <property type="entry name" value="ATPase_F1/V1_b/a_C"/>
</dbReference>
<dbReference type="InterPro" id="IPR027417">
    <property type="entry name" value="P-loop_NTPase"/>
</dbReference>
<dbReference type="NCBIfam" id="TIGR01039">
    <property type="entry name" value="atpD"/>
    <property type="match status" value="1"/>
</dbReference>
<dbReference type="PANTHER" id="PTHR15184">
    <property type="entry name" value="ATP SYNTHASE"/>
    <property type="match status" value="1"/>
</dbReference>
<dbReference type="PANTHER" id="PTHR15184:SF71">
    <property type="entry name" value="ATP SYNTHASE SUBUNIT BETA, MITOCHONDRIAL"/>
    <property type="match status" value="1"/>
</dbReference>
<dbReference type="Pfam" id="PF00006">
    <property type="entry name" value="ATP-synt_ab"/>
    <property type="match status" value="1"/>
</dbReference>
<dbReference type="Pfam" id="PF02874">
    <property type="entry name" value="ATP-synt_ab_N"/>
    <property type="match status" value="1"/>
</dbReference>
<dbReference type="Pfam" id="PF22919">
    <property type="entry name" value="ATP-synt_VA_C"/>
    <property type="match status" value="1"/>
</dbReference>
<dbReference type="SMART" id="SM00382">
    <property type="entry name" value="AAA"/>
    <property type="match status" value="1"/>
</dbReference>
<dbReference type="SUPFAM" id="SSF47917">
    <property type="entry name" value="C-terminal domain of alpha and beta subunits of F1 ATP synthase"/>
    <property type="match status" value="1"/>
</dbReference>
<dbReference type="SUPFAM" id="SSF50615">
    <property type="entry name" value="N-terminal domain of alpha and beta subunits of F1 ATP synthase"/>
    <property type="match status" value="1"/>
</dbReference>
<dbReference type="SUPFAM" id="SSF52540">
    <property type="entry name" value="P-loop containing nucleoside triphosphate hydrolases"/>
    <property type="match status" value="1"/>
</dbReference>
<dbReference type="PROSITE" id="PS00152">
    <property type="entry name" value="ATPASE_ALPHA_BETA"/>
    <property type="match status" value="1"/>
</dbReference>
<reference key="1">
    <citation type="journal article" date="2005" name="Proc. Natl. Acad. Sci. U.S.A.">
        <title>Complete genome sequence of Vibrio fischeri: a symbiotic bacterium with pathogenic congeners.</title>
        <authorList>
            <person name="Ruby E.G."/>
            <person name="Urbanowski M."/>
            <person name="Campbell J."/>
            <person name="Dunn A."/>
            <person name="Faini M."/>
            <person name="Gunsalus R."/>
            <person name="Lostroh P."/>
            <person name="Lupp C."/>
            <person name="McCann J."/>
            <person name="Millikan D."/>
            <person name="Schaefer A."/>
            <person name="Stabb E."/>
            <person name="Stevens A."/>
            <person name="Visick K."/>
            <person name="Whistler C."/>
            <person name="Greenberg E.P."/>
        </authorList>
    </citation>
    <scope>NUCLEOTIDE SEQUENCE [LARGE SCALE GENOMIC DNA]</scope>
    <source>
        <strain>ATCC 700601 / ES114</strain>
    </source>
</reference>
<sequence>MTTGKIVQIIGAVVDVEFPQGEVPRVYDALNVVDAQERLVLEVQQQIGGGVVRCIVMGSSDGLRRGLTVENTGAPISVPVGTKTLGRIMNVLGDAIDECGDIDAEEHYAIHREAPSYEEQSNSTELLETGVKVIDLVCPFAKGGKIGLFGGAGVGKTVNMMELINNIALQHSGLSVFAGVGERTREGNDFYFEMQEAGVVNIEKPEESKVAMVYGQMNEPPGNRLRVALTGLTMAERFRDEGRDVLLFVDNIYRYTLAGTEVSALLGRMPSAVGYQPTLAEEMGVLQERITSTKQGSITSVQAVYVPADDLTDPSPATTFAHLDATVVLNRNIAAMGLYPAIDPLDSTSRQLDPLVVGQEHYDIARGVQSTLQRYKELKDIIAILGMDELSEEDKQVVSRARKIEKFLTQPYHVAEVFTGDPGIYVPLKDTLAGFKGLLAGDYDDVPEQAFMYCGKIEDALEKAKKL</sequence>
<accession>Q5E1N7</accession>
<keyword id="KW-0066">ATP synthesis</keyword>
<keyword id="KW-0067">ATP-binding</keyword>
<keyword id="KW-0997">Cell inner membrane</keyword>
<keyword id="KW-1003">Cell membrane</keyword>
<keyword id="KW-0139">CF(1)</keyword>
<keyword id="KW-0375">Hydrogen ion transport</keyword>
<keyword id="KW-0406">Ion transport</keyword>
<keyword id="KW-0472">Membrane</keyword>
<keyword id="KW-0547">Nucleotide-binding</keyword>
<keyword id="KW-1185">Reference proteome</keyword>
<keyword id="KW-1278">Translocase</keyword>
<keyword id="KW-0813">Transport</keyword>
<gene>
    <name evidence="1" type="primary">atpD</name>
    <name type="ordered locus">VF_2564</name>
</gene>